<reference key="1">
    <citation type="journal article" date="2011" name="Stand. Genomic Sci.">
        <title>Complete genome sequence of Rhodospirillum rubrum type strain (S1).</title>
        <authorList>
            <person name="Munk A.C."/>
            <person name="Copeland A."/>
            <person name="Lucas S."/>
            <person name="Lapidus A."/>
            <person name="Del Rio T.G."/>
            <person name="Barry K."/>
            <person name="Detter J.C."/>
            <person name="Hammon N."/>
            <person name="Israni S."/>
            <person name="Pitluck S."/>
            <person name="Brettin T."/>
            <person name="Bruce D."/>
            <person name="Han C."/>
            <person name="Tapia R."/>
            <person name="Gilna P."/>
            <person name="Schmutz J."/>
            <person name="Larimer F."/>
            <person name="Land M."/>
            <person name="Kyrpides N.C."/>
            <person name="Mavromatis K."/>
            <person name="Richardson P."/>
            <person name="Rohde M."/>
            <person name="Goeker M."/>
            <person name="Klenk H.P."/>
            <person name="Zhang Y."/>
            <person name="Roberts G.P."/>
            <person name="Reslewic S."/>
            <person name="Schwartz D.C."/>
        </authorList>
    </citation>
    <scope>NUCLEOTIDE SEQUENCE [LARGE SCALE GENOMIC DNA]</scope>
    <source>
        <strain>ATCC 11170 / ATH 1.1.1 / DSM 467 / LMG 4362 / NCIMB 8255 / S1</strain>
    </source>
</reference>
<sequence length="862" mass="95530">MASEDRYNVKETEAKWQTAWAEGGCFTAREDRTRPKYYVLEMFPYPSGRIHMGHVRNYTLGDVVARFKRAQGFNVLHPMGWDAFGLPAENAAIQRGVHPATWTRQNIAIMREQFKPMGLSIDWSREVSTCEPAYYRHEQKMFLDFLKAGLAYRRESWVNWDPVEHTVLANEQVIDGKGWRSGAPVERRKLSQWFLRITRYAEDLLAAIGDLDRWPDKVRLMQTNWIGRSEGARVRFGLVGRDQALEVYTTRPDTLFGASFCAISANHPLAAEIAATNPDLAAFIAECGRMGTSEVEIETAEKKGFDTGLKVRHPFDPAWELPVYVANFVLMEYGTGAIFGCPAHDQRDMDFARKYGLPVRAVVAPAGVDAEAFAKDLEASDTAFSEDGVAIASGFLDGLPVSEAKARAIAHIAELGAGEGVVQFRLRDWGVSRQRYWGCPIPIIHCDDCGPVPVPEDQLPVLLPEDVTFDKPGNPLDHHPTWKHVACPQCGKPARRETDTFDTFFESSWYFARFCAPHDTDRAFEREAVDYWLPVDQYVGGVEHAVLHLLYSRFFTRALRDCGYLGVSEPFTGLFTQGMICHETYRDTDGAWLSPDQIDKAADGTATLLSDGSPVSVGRSEKMSKSKMNTVDPTAILESYGADAARLFMLSDSPPDRDMDWTDSGIEGAWRYIGRLWRMALQPQIDPGAVGAPLPADLGPGAAALVRHVHKAVAGVTDDLEKFRFNAAVARLRELTNAIAALDGKEAGAGAVYRFALETAARLAAPMIPHIAEEMWSHLGRDGLLAETPWPTWDPLMLIDDQVTIAVQVNGKMRGTVDLPKDAKREDAEAAALALPTVLAQLAGAAPRKVIVVPNRIINVVV</sequence>
<organism>
    <name type="scientific">Rhodospirillum rubrum (strain ATCC 11170 / ATH 1.1.1 / DSM 467 / LMG 4362 / NCIMB 8255 / S1)</name>
    <dbReference type="NCBI Taxonomy" id="269796"/>
    <lineage>
        <taxon>Bacteria</taxon>
        <taxon>Pseudomonadati</taxon>
        <taxon>Pseudomonadota</taxon>
        <taxon>Alphaproteobacteria</taxon>
        <taxon>Rhodospirillales</taxon>
        <taxon>Rhodospirillaceae</taxon>
        <taxon>Rhodospirillum</taxon>
    </lineage>
</organism>
<evidence type="ECO:0000255" key="1">
    <source>
        <dbReference type="HAMAP-Rule" id="MF_00049"/>
    </source>
</evidence>
<dbReference type="EC" id="6.1.1.4" evidence="1"/>
<dbReference type="EMBL" id="CP000230">
    <property type="protein sequence ID" value="ABC24425.1"/>
    <property type="molecule type" value="Genomic_DNA"/>
</dbReference>
<dbReference type="RefSeq" id="WP_011391378.1">
    <property type="nucleotide sequence ID" value="NC_007643.1"/>
</dbReference>
<dbReference type="RefSeq" id="YP_428712.1">
    <property type="nucleotide sequence ID" value="NC_007643.1"/>
</dbReference>
<dbReference type="SMR" id="Q2RN70"/>
<dbReference type="STRING" id="269796.Rru_A3631"/>
<dbReference type="EnsemblBacteria" id="ABC24425">
    <property type="protein sequence ID" value="ABC24425"/>
    <property type="gene ID" value="Rru_A3631"/>
</dbReference>
<dbReference type="KEGG" id="rru:Rru_A3631"/>
<dbReference type="PATRIC" id="fig|269796.9.peg.3752"/>
<dbReference type="eggNOG" id="COG0495">
    <property type="taxonomic scope" value="Bacteria"/>
</dbReference>
<dbReference type="HOGENOM" id="CLU_004427_0_0_5"/>
<dbReference type="PhylomeDB" id="Q2RN70"/>
<dbReference type="Proteomes" id="UP000001929">
    <property type="component" value="Chromosome"/>
</dbReference>
<dbReference type="GO" id="GO:0005829">
    <property type="term" value="C:cytosol"/>
    <property type="evidence" value="ECO:0007669"/>
    <property type="project" value="TreeGrafter"/>
</dbReference>
<dbReference type="GO" id="GO:0002161">
    <property type="term" value="F:aminoacyl-tRNA deacylase activity"/>
    <property type="evidence" value="ECO:0007669"/>
    <property type="project" value="InterPro"/>
</dbReference>
<dbReference type="GO" id="GO:0005524">
    <property type="term" value="F:ATP binding"/>
    <property type="evidence" value="ECO:0007669"/>
    <property type="project" value="UniProtKB-UniRule"/>
</dbReference>
<dbReference type="GO" id="GO:0004823">
    <property type="term" value="F:leucine-tRNA ligase activity"/>
    <property type="evidence" value="ECO:0007669"/>
    <property type="project" value="UniProtKB-UniRule"/>
</dbReference>
<dbReference type="GO" id="GO:0006429">
    <property type="term" value="P:leucyl-tRNA aminoacylation"/>
    <property type="evidence" value="ECO:0007669"/>
    <property type="project" value="UniProtKB-UniRule"/>
</dbReference>
<dbReference type="CDD" id="cd07958">
    <property type="entry name" value="Anticodon_Ia_Leu_BEm"/>
    <property type="match status" value="1"/>
</dbReference>
<dbReference type="CDD" id="cd00812">
    <property type="entry name" value="LeuRS_core"/>
    <property type="match status" value="1"/>
</dbReference>
<dbReference type="FunFam" id="1.10.730.10:FF:000002">
    <property type="entry name" value="Leucine--tRNA ligase"/>
    <property type="match status" value="1"/>
</dbReference>
<dbReference type="FunFam" id="3.40.50.620:FF:000003">
    <property type="entry name" value="Leucine--tRNA ligase"/>
    <property type="match status" value="1"/>
</dbReference>
<dbReference type="FunFam" id="3.40.50.620:FF:000056">
    <property type="entry name" value="Leucine--tRNA ligase"/>
    <property type="match status" value="1"/>
</dbReference>
<dbReference type="Gene3D" id="2.20.28.290">
    <property type="match status" value="1"/>
</dbReference>
<dbReference type="Gene3D" id="3.10.20.590">
    <property type="match status" value="1"/>
</dbReference>
<dbReference type="Gene3D" id="3.40.50.620">
    <property type="entry name" value="HUPs"/>
    <property type="match status" value="2"/>
</dbReference>
<dbReference type="Gene3D" id="1.10.730.10">
    <property type="entry name" value="Isoleucyl-tRNA Synthetase, Domain 1"/>
    <property type="match status" value="1"/>
</dbReference>
<dbReference type="Gene3D" id="3.90.740.10">
    <property type="entry name" value="Valyl/Leucyl/Isoleucyl-tRNA synthetase, editing domain"/>
    <property type="match status" value="1"/>
</dbReference>
<dbReference type="HAMAP" id="MF_00049_B">
    <property type="entry name" value="Leu_tRNA_synth_B"/>
    <property type="match status" value="1"/>
</dbReference>
<dbReference type="InterPro" id="IPR001412">
    <property type="entry name" value="aa-tRNA-synth_I_CS"/>
</dbReference>
<dbReference type="InterPro" id="IPR002300">
    <property type="entry name" value="aa-tRNA-synth_Ia"/>
</dbReference>
<dbReference type="InterPro" id="IPR002302">
    <property type="entry name" value="Leu-tRNA-ligase"/>
</dbReference>
<dbReference type="InterPro" id="IPR025709">
    <property type="entry name" value="Leu_tRNA-synth_edit"/>
</dbReference>
<dbReference type="InterPro" id="IPR013155">
    <property type="entry name" value="M/V/L/I-tRNA-synth_anticd-bd"/>
</dbReference>
<dbReference type="InterPro" id="IPR015413">
    <property type="entry name" value="Methionyl/Leucyl_tRNA_Synth"/>
</dbReference>
<dbReference type="InterPro" id="IPR014729">
    <property type="entry name" value="Rossmann-like_a/b/a_fold"/>
</dbReference>
<dbReference type="InterPro" id="IPR009080">
    <property type="entry name" value="tRNAsynth_Ia_anticodon-bd"/>
</dbReference>
<dbReference type="InterPro" id="IPR009008">
    <property type="entry name" value="Val/Leu/Ile-tRNA-synth_edit"/>
</dbReference>
<dbReference type="NCBIfam" id="TIGR00396">
    <property type="entry name" value="leuS_bact"/>
    <property type="match status" value="1"/>
</dbReference>
<dbReference type="PANTHER" id="PTHR43740:SF2">
    <property type="entry name" value="LEUCINE--TRNA LIGASE, MITOCHONDRIAL"/>
    <property type="match status" value="1"/>
</dbReference>
<dbReference type="PANTHER" id="PTHR43740">
    <property type="entry name" value="LEUCYL-TRNA SYNTHETASE"/>
    <property type="match status" value="1"/>
</dbReference>
<dbReference type="Pfam" id="PF08264">
    <property type="entry name" value="Anticodon_1"/>
    <property type="match status" value="1"/>
</dbReference>
<dbReference type="Pfam" id="PF00133">
    <property type="entry name" value="tRNA-synt_1"/>
    <property type="match status" value="2"/>
</dbReference>
<dbReference type="Pfam" id="PF13603">
    <property type="entry name" value="tRNA-synt_1_2"/>
    <property type="match status" value="1"/>
</dbReference>
<dbReference type="Pfam" id="PF09334">
    <property type="entry name" value="tRNA-synt_1g"/>
    <property type="match status" value="1"/>
</dbReference>
<dbReference type="PRINTS" id="PR00985">
    <property type="entry name" value="TRNASYNTHLEU"/>
</dbReference>
<dbReference type="SUPFAM" id="SSF47323">
    <property type="entry name" value="Anticodon-binding domain of a subclass of class I aminoacyl-tRNA synthetases"/>
    <property type="match status" value="1"/>
</dbReference>
<dbReference type="SUPFAM" id="SSF52374">
    <property type="entry name" value="Nucleotidylyl transferase"/>
    <property type="match status" value="1"/>
</dbReference>
<dbReference type="SUPFAM" id="SSF50677">
    <property type="entry name" value="ValRS/IleRS/LeuRS editing domain"/>
    <property type="match status" value="1"/>
</dbReference>
<dbReference type="PROSITE" id="PS00178">
    <property type="entry name" value="AA_TRNA_LIGASE_I"/>
    <property type="match status" value="1"/>
</dbReference>
<comment type="catalytic activity">
    <reaction evidence="1">
        <text>tRNA(Leu) + L-leucine + ATP = L-leucyl-tRNA(Leu) + AMP + diphosphate</text>
        <dbReference type="Rhea" id="RHEA:11688"/>
        <dbReference type="Rhea" id="RHEA-COMP:9613"/>
        <dbReference type="Rhea" id="RHEA-COMP:9622"/>
        <dbReference type="ChEBI" id="CHEBI:30616"/>
        <dbReference type="ChEBI" id="CHEBI:33019"/>
        <dbReference type="ChEBI" id="CHEBI:57427"/>
        <dbReference type="ChEBI" id="CHEBI:78442"/>
        <dbReference type="ChEBI" id="CHEBI:78494"/>
        <dbReference type="ChEBI" id="CHEBI:456215"/>
        <dbReference type="EC" id="6.1.1.4"/>
    </reaction>
</comment>
<comment type="subcellular location">
    <subcellularLocation>
        <location evidence="1">Cytoplasm</location>
    </subcellularLocation>
</comment>
<comment type="similarity">
    <text evidence="1">Belongs to the class-I aminoacyl-tRNA synthetase family.</text>
</comment>
<keyword id="KW-0030">Aminoacyl-tRNA synthetase</keyword>
<keyword id="KW-0067">ATP-binding</keyword>
<keyword id="KW-0963">Cytoplasm</keyword>
<keyword id="KW-0436">Ligase</keyword>
<keyword id="KW-0547">Nucleotide-binding</keyword>
<keyword id="KW-0648">Protein biosynthesis</keyword>
<keyword id="KW-1185">Reference proteome</keyword>
<protein>
    <recommendedName>
        <fullName evidence="1">Leucine--tRNA ligase</fullName>
        <ecNumber evidence="1">6.1.1.4</ecNumber>
    </recommendedName>
    <alternativeName>
        <fullName evidence="1">Leucyl-tRNA synthetase</fullName>
        <shortName evidence="1">LeuRS</shortName>
    </alternativeName>
</protein>
<accession>Q2RN70</accession>
<name>SYL_RHORT</name>
<feature type="chain" id="PRO_0000334805" description="Leucine--tRNA ligase">
    <location>
        <begin position="1"/>
        <end position="862"/>
    </location>
</feature>
<feature type="short sequence motif" description="'HIGH' region">
    <location>
        <begin position="44"/>
        <end position="54"/>
    </location>
</feature>
<feature type="short sequence motif" description="'KMSKS' region">
    <location>
        <begin position="622"/>
        <end position="626"/>
    </location>
</feature>
<feature type="binding site" evidence="1">
    <location>
        <position position="625"/>
    </location>
    <ligand>
        <name>ATP</name>
        <dbReference type="ChEBI" id="CHEBI:30616"/>
    </ligand>
</feature>
<gene>
    <name evidence="1" type="primary">leuS</name>
    <name type="ordered locus">Rru_A3631</name>
</gene>
<proteinExistence type="inferred from homology"/>